<evidence type="ECO:0000250" key="1"/>
<evidence type="ECO:0000255" key="2">
    <source>
        <dbReference type="PROSITE-ProRule" id="PRU00221"/>
    </source>
</evidence>
<evidence type="ECO:0000256" key="3">
    <source>
        <dbReference type="SAM" id="MobiDB-lite"/>
    </source>
</evidence>
<evidence type="ECO:0000305" key="4"/>
<gene>
    <name type="primary">sec31</name>
    <name type="ORF">B24N11.230</name>
    <name type="ORF">NCU06738</name>
</gene>
<protein>
    <recommendedName>
        <fullName>Protein transport protein sec31</fullName>
    </recommendedName>
</protein>
<dbReference type="EMBL" id="BX284751">
    <property type="protein sequence ID" value="CAD70409.1"/>
    <property type="molecule type" value="Genomic_DNA"/>
</dbReference>
<dbReference type="EMBL" id="CM002237">
    <property type="protein sequence ID" value="EAA34274.1"/>
    <property type="molecule type" value="Genomic_DNA"/>
</dbReference>
<dbReference type="RefSeq" id="XP_963510.1">
    <property type="nucleotide sequence ID" value="XM_958417.2"/>
</dbReference>
<dbReference type="SMR" id="Q873A1"/>
<dbReference type="FunCoup" id="Q873A1">
    <property type="interactions" value="709"/>
</dbReference>
<dbReference type="STRING" id="367110.Q873A1"/>
<dbReference type="PaxDb" id="5141-EFNCRP00000006817"/>
<dbReference type="EnsemblFungi" id="EAA34274">
    <property type="protein sequence ID" value="EAA34274"/>
    <property type="gene ID" value="NCU06738"/>
</dbReference>
<dbReference type="GeneID" id="3879671"/>
<dbReference type="KEGG" id="ncr:NCU06738"/>
<dbReference type="VEuPathDB" id="FungiDB:NCU06738"/>
<dbReference type="HOGENOM" id="CLU_003033_2_0_1"/>
<dbReference type="InParanoid" id="Q873A1"/>
<dbReference type="OMA" id="WLERPCG"/>
<dbReference type="OrthoDB" id="542917at2759"/>
<dbReference type="Proteomes" id="UP000001805">
    <property type="component" value="Chromosome 6, Linkage Group II"/>
</dbReference>
<dbReference type="GO" id="GO:0030127">
    <property type="term" value="C:COPII vesicle coat"/>
    <property type="evidence" value="ECO:0000318"/>
    <property type="project" value="GO_Central"/>
</dbReference>
<dbReference type="GO" id="GO:0070971">
    <property type="term" value="C:endoplasmic reticulum exit site"/>
    <property type="evidence" value="ECO:0000318"/>
    <property type="project" value="GO_Central"/>
</dbReference>
<dbReference type="GO" id="GO:0005789">
    <property type="term" value="C:endoplasmic reticulum membrane"/>
    <property type="evidence" value="ECO:0007669"/>
    <property type="project" value="UniProtKB-SubCell"/>
</dbReference>
<dbReference type="GO" id="GO:0005198">
    <property type="term" value="F:structural molecule activity"/>
    <property type="evidence" value="ECO:0000318"/>
    <property type="project" value="GO_Central"/>
</dbReference>
<dbReference type="GO" id="GO:0090110">
    <property type="term" value="P:COPII-coated vesicle cargo loading"/>
    <property type="evidence" value="ECO:0000318"/>
    <property type="project" value="GO_Central"/>
</dbReference>
<dbReference type="GO" id="GO:0007029">
    <property type="term" value="P:endoplasmic reticulum organization"/>
    <property type="evidence" value="ECO:0000318"/>
    <property type="project" value="GO_Central"/>
</dbReference>
<dbReference type="GO" id="GO:0015031">
    <property type="term" value="P:protein transport"/>
    <property type="evidence" value="ECO:0007669"/>
    <property type="project" value="UniProtKB-KW"/>
</dbReference>
<dbReference type="FunFam" id="1.20.940.10:FF:000007">
    <property type="entry name" value="Protein transport protein (SEC31), putative"/>
    <property type="match status" value="1"/>
</dbReference>
<dbReference type="FunFam" id="2.130.10.10:FF:000193">
    <property type="entry name" value="Protein transport protein SEC31, putative"/>
    <property type="match status" value="1"/>
</dbReference>
<dbReference type="Gene3D" id="1.25.40.1030">
    <property type="match status" value="1"/>
</dbReference>
<dbReference type="Gene3D" id="1.20.940.10">
    <property type="entry name" value="Functional domain of the splicing factor Prp18"/>
    <property type="match status" value="1"/>
</dbReference>
<dbReference type="Gene3D" id="2.130.10.10">
    <property type="entry name" value="YVTN repeat-like/Quinoprotein amine dehydrogenase"/>
    <property type="match status" value="1"/>
</dbReference>
<dbReference type="InterPro" id="IPR024298">
    <property type="entry name" value="Sec16_Sec23-bd"/>
</dbReference>
<dbReference type="InterPro" id="IPR040251">
    <property type="entry name" value="SEC31-like"/>
</dbReference>
<dbReference type="InterPro" id="IPR015943">
    <property type="entry name" value="WD40/YVTN_repeat-like_dom_sf"/>
</dbReference>
<dbReference type="InterPro" id="IPR036322">
    <property type="entry name" value="WD40_repeat_dom_sf"/>
</dbReference>
<dbReference type="InterPro" id="IPR001680">
    <property type="entry name" value="WD40_rpt"/>
</dbReference>
<dbReference type="PANTHER" id="PTHR13923">
    <property type="entry name" value="SEC31-RELATED PROTEIN"/>
    <property type="match status" value="1"/>
</dbReference>
<dbReference type="PANTHER" id="PTHR13923:SF11">
    <property type="entry name" value="SECRETORY 31, ISOFORM D"/>
    <property type="match status" value="1"/>
</dbReference>
<dbReference type="Pfam" id="PF12931">
    <property type="entry name" value="TPR_Sec16"/>
    <property type="match status" value="1"/>
</dbReference>
<dbReference type="Pfam" id="PF00400">
    <property type="entry name" value="WD40"/>
    <property type="match status" value="2"/>
</dbReference>
<dbReference type="SMART" id="SM00320">
    <property type="entry name" value="WD40"/>
    <property type="match status" value="5"/>
</dbReference>
<dbReference type="SUPFAM" id="SSF50978">
    <property type="entry name" value="WD40 repeat-like"/>
    <property type="match status" value="1"/>
</dbReference>
<dbReference type="PROSITE" id="PS50082">
    <property type="entry name" value="WD_REPEATS_2"/>
    <property type="match status" value="3"/>
</dbReference>
<dbReference type="PROSITE" id="PS50294">
    <property type="entry name" value="WD_REPEATS_REGION"/>
    <property type="match status" value="1"/>
</dbReference>
<name>SEC31_NEUCR</name>
<organism>
    <name type="scientific">Neurospora crassa (strain ATCC 24698 / 74-OR23-1A / CBS 708.71 / DSM 1257 / FGSC 987)</name>
    <dbReference type="NCBI Taxonomy" id="367110"/>
    <lineage>
        <taxon>Eukaryota</taxon>
        <taxon>Fungi</taxon>
        <taxon>Dikarya</taxon>
        <taxon>Ascomycota</taxon>
        <taxon>Pezizomycotina</taxon>
        <taxon>Sordariomycetes</taxon>
        <taxon>Sordariomycetidae</taxon>
        <taxon>Sordariales</taxon>
        <taxon>Sordariaceae</taxon>
        <taxon>Neurospora</taxon>
    </lineage>
</organism>
<feature type="chain" id="PRO_0000295442" description="Protein transport protein sec31">
    <location>
        <begin position="1"/>
        <end position="1256"/>
    </location>
</feature>
<feature type="repeat" description="WD 1">
    <location>
        <begin position="5"/>
        <end position="46"/>
    </location>
</feature>
<feature type="repeat" description="WD 2">
    <location>
        <begin position="65"/>
        <end position="109"/>
    </location>
</feature>
<feature type="repeat" description="WD 3">
    <location>
        <begin position="117"/>
        <end position="157"/>
    </location>
</feature>
<feature type="repeat" description="WD 4">
    <location>
        <begin position="161"/>
        <end position="201"/>
    </location>
</feature>
<feature type="repeat" description="WD 5">
    <location>
        <begin position="204"/>
        <end position="247"/>
    </location>
</feature>
<feature type="repeat" description="WD 6">
    <location>
        <begin position="251"/>
        <end position="291"/>
    </location>
</feature>
<feature type="repeat" description="WD 7">
    <location>
        <begin position="294"/>
        <end position="334"/>
    </location>
</feature>
<feature type="repeat" description="WD 8; interaction with sec13" evidence="2">
    <location>
        <begin position="375"/>
        <end position="403"/>
    </location>
</feature>
<feature type="region of interest" description="Disordered" evidence="3">
    <location>
        <begin position="473"/>
        <end position="507"/>
    </location>
</feature>
<feature type="region of interest" description="Disordered" evidence="3">
    <location>
        <begin position="789"/>
        <end position="832"/>
    </location>
</feature>
<feature type="region of interest" description="Disordered" evidence="3">
    <location>
        <begin position="870"/>
        <end position="1150"/>
    </location>
</feature>
<feature type="compositionally biased region" description="Low complexity" evidence="3">
    <location>
        <begin position="800"/>
        <end position="817"/>
    </location>
</feature>
<feature type="compositionally biased region" description="Polar residues" evidence="3">
    <location>
        <begin position="877"/>
        <end position="901"/>
    </location>
</feature>
<feature type="compositionally biased region" description="Pro residues" evidence="3">
    <location>
        <begin position="980"/>
        <end position="989"/>
    </location>
</feature>
<feature type="compositionally biased region" description="Pro residues" evidence="3">
    <location>
        <begin position="1030"/>
        <end position="1048"/>
    </location>
</feature>
<feature type="compositionally biased region" description="Low complexity" evidence="3">
    <location>
        <begin position="1049"/>
        <end position="1060"/>
    </location>
</feature>
<feature type="compositionally biased region" description="Low complexity" evidence="3">
    <location>
        <begin position="1067"/>
        <end position="1096"/>
    </location>
</feature>
<feature type="compositionally biased region" description="Pro residues" evidence="3">
    <location>
        <begin position="1097"/>
        <end position="1143"/>
    </location>
</feature>
<comment type="function">
    <text evidence="1">Component of the coat protein complex II (COPII) which promotes the formation of transport vesicles from the endoplasmic reticulum (ER). The coat has two main functions, the physical deformation of the endoplasmic reticulum membrane into vesicles and the selection of cargo molecules (By similarity).</text>
</comment>
<comment type="subunit">
    <text evidence="1">The COPII coat is composed of at least 5 proteins: the sec23/24 complex, the sec13/31 complex, and the protein vtr-7/sar1. Sec13 and sec31 make a 2:2 tetramer that forms the edge element of the COPII outer coat. The tetramer self-assembles in multiple copies to form the complete polyhedral cage. Interacts (via WD 8) with nup-20/sec13 (By similarity).</text>
</comment>
<comment type="subcellular location">
    <subcellularLocation>
        <location evidence="1">Cytoplasmic vesicle</location>
        <location evidence="1">COPII-coated vesicle membrane</location>
        <topology evidence="1">Peripheral membrane protein</topology>
        <orientation evidence="1">Cytoplasmic side</orientation>
    </subcellularLocation>
    <subcellularLocation>
        <location evidence="1">Endoplasmic reticulum membrane</location>
        <topology evidence="1">Peripheral membrane protein</topology>
        <orientation evidence="1">Cytoplasmic side</orientation>
    </subcellularLocation>
</comment>
<comment type="similarity">
    <text evidence="4">Belongs to the WD repeat SEC31 family.</text>
</comment>
<sequence length="1256" mass="134018">MVRLREIPRTAAFAWSPGANPLLVTGTRSGAVDADFSDETKLELWDLKLDSQEQGLELQPIASITAESRFYDIAWGQPNDEHPRGVIAGAMENGSLDLWDAEKLIAGEDALISRTTKHTGPIKALQFNPLRPQVLATAGAKGELFVWDVNDTSAPFRLGTAAAHDIDCLAWNPKVANILATGGAGGFVTVWDLKTKKASLTLNNHRKAVSAIAWDPENSTKLLTASSDDTAPVILLWNLRNSQAPEKTLQGHDQGILSLSWCQQDAGLLLSCGKDNRTLIWNPQTGERYGEFPEATNWTFYTRFNPHNPNLSATASFDGKIAIQTLQNTNPSAAPAAQNNLSDDDFFSKAASQPQAASFSLPRAPAWIERPVGVSFGFGGKLVFFNKVETAAGQKRSSKLQISSFSIDSDIGSATDKFEQAIQSGDIASICEEHIENAKTDEEKAEWQVMQTLSESDGRTKIIERLGFIKDEPVEEAKEAESPMSPEPKQEDSASLKPNGGEAKKHRRVVSMWGDGDDGEDFLSEIAATKGAKTDNPFNLLSVGNTHLEDQITRALILGKFEKAVEICLKEERWSDAFLIANCGSKELVEKVQTAYLQQKRGSPSYLRLISSVVAKNLWDIAYNADLADWKETMVTLCTYADPSEFPDLCEALGDRILESGNRKDASFCYLIGSKLEKVVGLWVDELQETEQAALNEEAGDSTFSVHAKSLQQFIEKVTIFRHVTKFNDSETSLTEGWKLAALYDKYLEYADIAAAHGQLSVAQKYLDLLPTSYPPAETARNRVRLATQKAGAQTAVRQATPAGRTTTTTSSRTAAPVGYQQPSLVPAPANPSSLNPYAPPVPAPVSAAASNPYAPPLAPVSAAASQYGASSSTYAPPQNQGYAPSGYTPPTQSYAPTSVTGYGVPAQNFGQPSPLGGPPKATAPPVQLKRDGVWNDVPMVTKAPPRRNTPSVAPLTSPFPGQPGIASPPPAGPFQQGAPTPPPPPKGSAPPRNVGAPPTGPPRPSSVSSNATNPYAPPPPAAGLQPTYGVPPAPRTASPYNPPPSAAAPPANRYAPAPATQQYTQGPPSGSGIAPPPASGAYTPAPPAASQQYAAAPPPPRAGFSAPPPASRPPGGGPPPAAGAPPQQQAPPPAAPPKPRYPPGDRSNIPEHAKELVDILSRDMQRVASKAPASFAPQVKDTQKRLNILFDHLNNEELIKTETIDQLAQLAGALAGKNYDIASKIQVEISKEKTEECGQWMVGVKRLISMSKATP</sequence>
<accession>Q873A1</accession>
<proteinExistence type="inferred from homology"/>
<reference key="1">
    <citation type="journal article" date="2003" name="Nucleic Acids Res.">
        <title>What's in the genome of a filamentous fungus? Analysis of the Neurospora genome sequence.</title>
        <authorList>
            <person name="Mannhaupt G."/>
            <person name="Montrone C."/>
            <person name="Haase D."/>
            <person name="Mewes H.-W."/>
            <person name="Aign V."/>
            <person name="Hoheisel J.D."/>
            <person name="Fartmann B."/>
            <person name="Nyakatura G."/>
            <person name="Kempken F."/>
            <person name="Maier J."/>
            <person name="Schulte U."/>
        </authorList>
    </citation>
    <scope>NUCLEOTIDE SEQUENCE [LARGE SCALE GENOMIC DNA]</scope>
    <source>
        <strain>ATCC 24698 / 74-OR23-1A / CBS 708.71 / DSM 1257 / FGSC 987</strain>
    </source>
</reference>
<reference key="2">
    <citation type="journal article" date="2003" name="Nature">
        <title>The genome sequence of the filamentous fungus Neurospora crassa.</title>
        <authorList>
            <person name="Galagan J.E."/>
            <person name="Calvo S.E."/>
            <person name="Borkovich K.A."/>
            <person name="Selker E.U."/>
            <person name="Read N.D."/>
            <person name="Jaffe D.B."/>
            <person name="FitzHugh W."/>
            <person name="Ma L.-J."/>
            <person name="Smirnov S."/>
            <person name="Purcell S."/>
            <person name="Rehman B."/>
            <person name="Elkins T."/>
            <person name="Engels R."/>
            <person name="Wang S."/>
            <person name="Nielsen C.B."/>
            <person name="Butler J."/>
            <person name="Endrizzi M."/>
            <person name="Qui D."/>
            <person name="Ianakiev P."/>
            <person name="Bell-Pedersen D."/>
            <person name="Nelson M.A."/>
            <person name="Werner-Washburne M."/>
            <person name="Selitrennikoff C.P."/>
            <person name="Kinsey J.A."/>
            <person name="Braun E.L."/>
            <person name="Zelter A."/>
            <person name="Schulte U."/>
            <person name="Kothe G.O."/>
            <person name="Jedd G."/>
            <person name="Mewes H.-W."/>
            <person name="Staben C."/>
            <person name="Marcotte E."/>
            <person name="Greenberg D."/>
            <person name="Roy A."/>
            <person name="Foley K."/>
            <person name="Naylor J."/>
            <person name="Stange-Thomann N."/>
            <person name="Barrett R."/>
            <person name="Gnerre S."/>
            <person name="Kamal M."/>
            <person name="Kamvysselis M."/>
            <person name="Mauceli E.W."/>
            <person name="Bielke C."/>
            <person name="Rudd S."/>
            <person name="Frishman D."/>
            <person name="Krystofova S."/>
            <person name="Rasmussen C."/>
            <person name="Metzenberg R.L."/>
            <person name="Perkins D.D."/>
            <person name="Kroken S."/>
            <person name="Cogoni C."/>
            <person name="Macino G."/>
            <person name="Catcheside D.E.A."/>
            <person name="Li W."/>
            <person name="Pratt R.J."/>
            <person name="Osmani S.A."/>
            <person name="DeSouza C.P.C."/>
            <person name="Glass N.L."/>
            <person name="Orbach M.J."/>
            <person name="Berglund J.A."/>
            <person name="Voelker R."/>
            <person name="Yarden O."/>
            <person name="Plamann M."/>
            <person name="Seiler S."/>
            <person name="Dunlap J.C."/>
            <person name="Radford A."/>
            <person name="Aramayo R."/>
            <person name="Natvig D.O."/>
            <person name="Alex L.A."/>
            <person name="Mannhaupt G."/>
            <person name="Ebbole D.J."/>
            <person name="Freitag M."/>
            <person name="Paulsen I."/>
            <person name="Sachs M.S."/>
            <person name="Lander E.S."/>
            <person name="Nusbaum C."/>
            <person name="Birren B.W."/>
        </authorList>
    </citation>
    <scope>NUCLEOTIDE SEQUENCE [LARGE SCALE GENOMIC DNA]</scope>
    <source>
        <strain>ATCC 24698 / 74-OR23-1A / CBS 708.71 / DSM 1257 / FGSC 987</strain>
    </source>
</reference>
<keyword id="KW-0968">Cytoplasmic vesicle</keyword>
<keyword id="KW-0256">Endoplasmic reticulum</keyword>
<keyword id="KW-0931">ER-Golgi transport</keyword>
<keyword id="KW-0472">Membrane</keyword>
<keyword id="KW-0653">Protein transport</keyword>
<keyword id="KW-1185">Reference proteome</keyword>
<keyword id="KW-0677">Repeat</keyword>
<keyword id="KW-0813">Transport</keyword>
<keyword id="KW-0853">WD repeat</keyword>